<organism>
    <name type="scientific">Bartonella henselae (strain ATCC 49882 / DSM 28221 / CCUG 30454 / Houston 1)</name>
    <name type="common">Rochalimaea henselae</name>
    <dbReference type="NCBI Taxonomy" id="283166"/>
    <lineage>
        <taxon>Bacteria</taxon>
        <taxon>Pseudomonadati</taxon>
        <taxon>Pseudomonadota</taxon>
        <taxon>Alphaproteobacteria</taxon>
        <taxon>Hyphomicrobiales</taxon>
        <taxon>Bartonellaceae</taxon>
        <taxon>Bartonella</taxon>
    </lineage>
</organism>
<keyword id="KW-0687">Ribonucleoprotein</keyword>
<keyword id="KW-0689">Ribosomal protein</keyword>
<dbReference type="EMBL" id="BX897699">
    <property type="protein sequence ID" value="CAF28199.1"/>
    <property type="molecule type" value="Genomic_DNA"/>
</dbReference>
<dbReference type="SMR" id="Q6G234"/>
<dbReference type="PaxDb" id="283166-BH14340"/>
<dbReference type="EnsemblBacteria" id="CAF28199">
    <property type="protein sequence ID" value="CAF28199"/>
    <property type="gene ID" value="BH14340"/>
</dbReference>
<dbReference type="KEGG" id="bhe:BH14340"/>
<dbReference type="eggNOG" id="COG0257">
    <property type="taxonomic scope" value="Bacteria"/>
</dbReference>
<dbReference type="Proteomes" id="UP000000421">
    <property type="component" value="Chromosome"/>
</dbReference>
<dbReference type="GO" id="GO:1990904">
    <property type="term" value="C:ribonucleoprotein complex"/>
    <property type="evidence" value="ECO:0007669"/>
    <property type="project" value="UniProtKB-KW"/>
</dbReference>
<dbReference type="GO" id="GO:0005840">
    <property type="term" value="C:ribosome"/>
    <property type="evidence" value="ECO:0007669"/>
    <property type="project" value="UniProtKB-KW"/>
</dbReference>
<dbReference type="GO" id="GO:0003735">
    <property type="term" value="F:structural constituent of ribosome"/>
    <property type="evidence" value="ECO:0007669"/>
    <property type="project" value="InterPro"/>
</dbReference>
<dbReference type="GO" id="GO:0006412">
    <property type="term" value="P:translation"/>
    <property type="evidence" value="ECO:0007669"/>
    <property type="project" value="UniProtKB-UniRule"/>
</dbReference>
<dbReference type="HAMAP" id="MF_00251">
    <property type="entry name" value="Ribosomal_bL36"/>
    <property type="match status" value="1"/>
</dbReference>
<dbReference type="InterPro" id="IPR000473">
    <property type="entry name" value="Ribosomal_bL36"/>
</dbReference>
<dbReference type="InterPro" id="IPR035977">
    <property type="entry name" value="Ribosomal_bL36_sp"/>
</dbReference>
<dbReference type="InterPro" id="IPR047621">
    <property type="entry name" value="Ribosomal_L36_bact"/>
</dbReference>
<dbReference type="NCBIfam" id="NF002021">
    <property type="entry name" value="PRK00831.1"/>
    <property type="match status" value="1"/>
</dbReference>
<dbReference type="PANTHER" id="PTHR47781">
    <property type="entry name" value="50S RIBOSOMAL PROTEIN L36 2"/>
    <property type="match status" value="1"/>
</dbReference>
<dbReference type="PANTHER" id="PTHR47781:SF1">
    <property type="entry name" value="LARGE RIBOSOMAL SUBUNIT PROTEIN BL36B"/>
    <property type="match status" value="1"/>
</dbReference>
<dbReference type="Pfam" id="PF00444">
    <property type="entry name" value="Ribosomal_L36"/>
    <property type="match status" value="1"/>
</dbReference>
<dbReference type="SUPFAM" id="SSF57840">
    <property type="entry name" value="Ribosomal protein L36"/>
    <property type="match status" value="1"/>
</dbReference>
<dbReference type="PROSITE" id="PS00828">
    <property type="entry name" value="RIBOSOMAL_L36"/>
    <property type="match status" value="1"/>
</dbReference>
<proteinExistence type="inferred from homology"/>
<evidence type="ECO:0000255" key="1">
    <source>
        <dbReference type="HAMAP-Rule" id="MF_00251"/>
    </source>
</evidence>
<evidence type="ECO:0000305" key="2"/>
<name>RL36_BARHE</name>
<feature type="chain" id="PRO_0000126150" description="Large ribosomal subunit protein bL36">
    <location>
        <begin position="1"/>
        <end position="41"/>
    </location>
</feature>
<sequence>MKIKNSLKALRERHRNNRLVRRKGRVYILNKTNPRFRARQG</sequence>
<accession>Q6G234</accession>
<gene>
    <name evidence="1" type="primary">rpmJ</name>
    <name type="ordered locus">BH14340</name>
</gene>
<protein>
    <recommendedName>
        <fullName evidence="1">Large ribosomal subunit protein bL36</fullName>
    </recommendedName>
    <alternativeName>
        <fullName evidence="2">50S ribosomal protein L36</fullName>
    </alternativeName>
</protein>
<reference key="1">
    <citation type="journal article" date="2004" name="Proc. Natl. Acad. Sci. U.S.A.">
        <title>The louse-borne human pathogen Bartonella quintana is a genomic derivative of the zoonotic agent Bartonella henselae.</title>
        <authorList>
            <person name="Alsmark U.C.M."/>
            <person name="Frank A.C."/>
            <person name="Karlberg E.O."/>
            <person name="Legault B.-A."/>
            <person name="Ardell D.H."/>
            <person name="Canbaeck B."/>
            <person name="Eriksson A.-S."/>
            <person name="Naeslund A.K."/>
            <person name="Handley S.A."/>
            <person name="Huvet M."/>
            <person name="La Scola B."/>
            <person name="Holmberg M."/>
            <person name="Andersson S.G.E."/>
        </authorList>
    </citation>
    <scope>NUCLEOTIDE SEQUENCE [LARGE SCALE GENOMIC DNA]</scope>
    <source>
        <strain>ATCC 49882 / DSM 28221 / CCUG 30454 / Houston 1</strain>
    </source>
</reference>
<comment type="similarity">
    <text evidence="1">Belongs to the bacterial ribosomal protein bL36 family.</text>
</comment>